<geneLocation type="plasmid">
    <name>pOSAK1</name>
</geneLocation>
<keyword id="KW-0002">3D-structure</keyword>
<keyword id="KW-0255">Endonuclease</keyword>
<keyword id="KW-0378">Hydrolase</keyword>
<keyword id="KW-0540">Nuclease</keyword>
<keyword id="KW-0614">Plasmid</keyword>
<keyword id="KW-1185">Reference proteome</keyword>
<keyword id="KW-1277">Toxin-antitoxin system</keyword>
<evidence type="ECO:0000269" key="1">
    <source>
    </source>
</evidence>
<evidence type="ECO:0007829" key="2">
    <source>
        <dbReference type="PDB" id="5HY3"/>
    </source>
</evidence>
<comment type="function">
    <text evidence="1">Toxic component of a type II toxin-antitoxin (TA) system. A stable (half-life over 20 minutes) endoribonuclease that degrades mRNA. Degradation may be translation-stimulated. Overexpression in the absence of cognate antitoxin LsoB causes retarded growth and mRNA degradation, this effect is mitigated upon coexpression with antitoxin LsoB or enterobacteria phage T4 Dmd. Degrades late enterobacteria phage T4 mRNAs, protecting the host against T4 reproduction.</text>
</comment>
<comment type="subunit">
    <text>Can form a complex with cognate antitoxin LsoB and with enterobacteria phage T4 antitoxin Dmd.</text>
</comment>
<comment type="miscellaneous">
    <text>This plasmid is only found in Sakai-derived strains of E.coli O157.</text>
</comment>
<proteinExistence type="evidence at protein level"/>
<accession>O82881</accession>
<gene>
    <name type="primary">lsoA</name>
</gene>
<reference key="1">
    <citation type="journal article" date="1998" name="DNA Res.">
        <title>Complete nucleotide sequences of 93-kb and 3.3-kb plasmids of an enterohemorrhagic Escherichia coli O157:H7 derived from Sakai outbreak.</title>
        <authorList>
            <person name="Makino K."/>
            <person name="Ishii K."/>
            <person name="Yasunaga T."/>
            <person name="Hattori M."/>
            <person name="Yokoyama K."/>
            <person name="Yatsudo H.C."/>
            <person name="Kubota Y."/>
            <person name="Yamaichi Y."/>
            <person name="Iida T."/>
            <person name="Yamamoto K."/>
            <person name="Honda T."/>
            <person name="Han C.G."/>
            <person name="Ohtsubo A."/>
            <person name="Kasamatsu M."/>
            <person name="Hayashi T."/>
            <person name="Kuhara S."/>
            <person name="Shinagawa H."/>
        </authorList>
    </citation>
    <scope>NUCLEOTIDE SEQUENCE [LARGE SCALE GENOMIC DNA]</scope>
    <source>
        <strain>O157:H7 / Sakai / RIMD 0509952 / EHEC</strain>
    </source>
</reference>
<reference key="2">
    <citation type="journal article" date="2012" name="Mol. Microbiol.">
        <title>Dmd of bacteriophage T4 functions as an antitoxin against Escherichia coli LsoA and RnlA toxins.</title>
        <authorList>
            <person name="Otsuka Y."/>
            <person name="Yonesaki T."/>
        </authorList>
    </citation>
    <scope>FUNCTION AS A TOXIN</scope>
    <scope>FUNCTION AS AN MRNA ENDORIBONUCLEASE</scope>
    <scope>INTERACTION WITH LSOB</scope>
    <scope>INTERACTION WITH ENTEROBACTERIA PHAGE T4 ANTITOXIN DMD</scope>
    <source>
        <strain>O157:H7 / Sakai / RIMD 0509952 / EHEC</strain>
    </source>
</reference>
<name>LSOA_ECO57</name>
<dbReference type="EC" id="3.1.-.-"/>
<dbReference type="EMBL" id="AB011548">
    <property type="protein sequence ID" value="BAA31756.1"/>
    <property type="molecule type" value="Genomic_DNA"/>
</dbReference>
<dbReference type="RefSeq" id="NP_052606.1">
    <property type="nucleotide sequence ID" value="NC_002127.1"/>
</dbReference>
<dbReference type="RefSeq" id="WP_000068433.1">
    <property type="nucleotide sequence ID" value="NZ_RWJR01000070.1"/>
</dbReference>
<dbReference type="PDB" id="5HY3">
    <property type="method" value="X-ray"/>
    <property type="resolution" value="3.10 A"/>
    <property type="chains" value="A=1-346"/>
</dbReference>
<dbReference type="PDBsum" id="5HY3"/>
<dbReference type="SMR" id="O82881"/>
<dbReference type="KEGG" id="ecs:pOSAK1_03"/>
<dbReference type="PATRIC" id="fig|386585.9.peg.3"/>
<dbReference type="HOGENOM" id="CLU_949108_0_0_6"/>
<dbReference type="Proteomes" id="UP000000558">
    <property type="component" value="Plasmid pOSAK1"/>
</dbReference>
<dbReference type="GO" id="GO:0004521">
    <property type="term" value="F:RNA endonuclease activity"/>
    <property type="evidence" value="ECO:0007669"/>
    <property type="project" value="InterPro"/>
</dbReference>
<dbReference type="Gene3D" id="6.10.250.2650">
    <property type="match status" value="1"/>
</dbReference>
<dbReference type="InterPro" id="IPR043994">
    <property type="entry name" value="RnlA/LsoA-toxin_DBD"/>
</dbReference>
<dbReference type="InterPro" id="IPR045837">
    <property type="entry name" value="RnlA_toxin_N"/>
</dbReference>
<dbReference type="InterPro" id="IPR031845">
    <property type="entry name" value="RnlA_toxin_NRD"/>
</dbReference>
<dbReference type="Pfam" id="PF19034">
    <property type="entry name" value="RnlA-toxin_DBD"/>
    <property type="match status" value="1"/>
</dbReference>
<dbReference type="Pfam" id="PF15935">
    <property type="entry name" value="RnlA_toxin"/>
    <property type="match status" value="1"/>
</dbReference>
<dbReference type="Pfam" id="PF19417">
    <property type="entry name" value="RnlA_toxin_N"/>
    <property type="match status" value="1"/>
</dbReference>
<feature type="chain" id="PRO_0000420765" description="mRNA endoribonuclease LsoA">
    <location>
        <begin position="1"/>
        <end position="346"/>
    </location>
</feature>
<feature type="strand" evidence="2">
    <location>
        <begin position="92"/>
        <end position="98"/>
    </location>
</feature>
<feature type="helix" evidence="2">
    <location>
        <begin position="103"/>
        <end position="113"/>
    </location>
</feature>
<feature type="strand" evidence="2">
    <location>
        <begin position="117"/>
        <end position="121"/>
    </location>
</feature>
<feature type="strand" evidence="2">
    <location>
        <begin position="125"/>
        <end position="127"/>
    </location>
</feature>
<feature type="strand" evidence="2">
    <location>
        <begin position="131"/>
        <end position="135"/>
    </location>
</feature>
<feature type="strand" evidence="2">
    <location>
        <begin position="152"/>
        <end position="159"/>
    </location>
</feature>
<feature type="helix" evidence="2">
    <location>
        <begin position="160"/>
        <end position="172"/>
    </location>
</feature>
<feature type="helix" evidence="2">
    <location>
        <begin position="175"/>
        <end position="185"/>
    </location>
</feature>
<feature type="helix" evidence="2">
    <location>
        <begin position="192"/>
        <end position="202"/>
    </location>
</feature>
<feature type="turn" evidence="2">
    <location>
        <begin position="204"/>
        <end position="208"/>
    </location>
</feature>
<feature type="helix" evidence="2">
    <location>
        <begin position="212"/>
        <end position="221"/>
    </location>
</feature>
<feature type="helix" evidence="2">
    <location>
        <begin position="223"/>
        <end position="226"/>
    </location>
</feature>
<feature type="helix" evidence="2">
    <location>
        <begin position="235"/>
        <end position="256"/>
    </location>
</feature>
<feature type="helix" evidence="2">
    <location>
        <begin position="265"/>
        <end position="268"/>
    </location>
</feature>
<feature type="strand" evidence="2">
    <location>
        <begin position="273"/>
        <end position="275"/>
    </location>
</feature>
<feature type="helix" evidence="2">
    <location>
        <begin position="280"/>
        <end position="282"/>
    </location>
</feature>
<feature type="turn" evidence="2">
    <location>
        <begin position="283"/>
        <end position="285"/>
    </location>
</feature>
<feature type="helix" evidence="2">
    <location>
        <begin position="290"/>
        <end position="309"/>
    </location>
</feature>
<feature type="helix" evidence="2">
    <location>
        <begin position="323"/>
        <end position="343"/>
    </location>
</feature>
<organism>
    <name type="scientific">Escherichia coli O157:H7</name>
    <dbReference type="NCBI Taxonomy" id="83334"/>
    <lineage>
        <taxon>Bacteria</taxon>
        <taxon>Pseudomonadati</taxon>
        <taxon>Pseudomonadota</taxon>
        <taxon>Gammaproteobacteria</taxon>
        <taxon>Enterobacterales</taxon>
        <taxon>Enterobacteriaceae</taxon>
        <taxon>Escherichia</taxon>
    </lineage>
</organism>
<sequence>MAQNPFKALNINIDKIESALTQNGVTNYSSNVKNERETHISGTYKGIDFLIKLMPSGGNTTIGRASGQNNTYFDEIALIIKENCLYSDTKNFEYTIPKFSDDDRANLFEFLSEEGITITEDNNNDPNCKHQYIMTTSNGDRVRAKIYKRGSIQFQGKYLQIASLINDFMCSILNMKEIVEQKNKEFNVDIKKETIESELHSKLPKSIDKIHEDIKKQLSCSLIMKKIDVEMEDYSTYCFSALRAIEGFIYQILNDVCNPSSSKNLGEYFTENKPKYIIREIHQETINGEIAEVLCECYTYWHENRHGLFHMKPGIADTKTINKLESIAIIDTVCQLIDGGVARLKL</sequence>
<protein>
    <recommendedName>
        <fullName>mRNA endoribonuclease LsoA</fullName>
        <ecNumber>3.1.-.-</ecNumber>
    </recommendedName>
    <alternativeName>
        <fullName>Toxin LsoA</fullName>
    </alternativeName>
</protein>